<protein>
    <recommendedName>
        <fullName evidence="5">Protein SMALL AUXIN UP-REGULATED RNA 54</fullName>
    </recommendedName>
</protein>
<sequence>MAIINRSKLTQTTMIKQILKRCSSLGKKQSSEYNDTHEHDGDSLPLDVPKGHFVVYVGGNRVRYVLPISFLTRPEFQLLLQQAEEEFGFDHNMGLTIPCEEVAFKSLITSMLQPTYI</sequence>
<keyword id="KW-1003">Cell membrane</keyword>
<keyword id="KW-0217">Developmental protein</keyword>
<keyword id="KW-0341">Growth regulation</keyword>
<keyword id="KW-0472">Membrane</keyword>
<keyword id="KW-1185">Reference proteome</keyword>
<proteinExistence type="evidence at transcript level"/>
<feature type="chain" id="PRO_0000455149" description="Protein SMALL AUXIN UP-REGULATED RNA 54">
    <location>
        <begin position="1"/>
        <end position="117"/>
    </location>
</feature>
<name>SAU54_ARATH</name>
<comment type="function">
    <text evidence="1 3">Provide a mechanistic link between auxin and plasma membrane H(+)-ATPases (PM H(+)-ATPases, e.g. AHA1 and AHA2), and triggers PM H(+)-ATPases activity by promoting phosphorylation of their C-terminal autoinhibitory domain as a result of PP2C-D subfamily of type 2C phosphatases inhibition, thus leading to the acidification of the apoplast and the facilitation of solutes and water uptake to drive cell expansion (By similarity). Triggers plant growth probably by promoting cell elongation (By similarity). Regulates branch angles and bending (By similarity).</text>
</comment>
<comment type="subcellular location">
    <subcellularLocation>
        <location evidence="2">Cell membrane</location>
        <topology evidence="2">Peripheral membrane protein</topology>
    </subcellularLocation>
</comment>
<comment type="tissue specificity">
    <text evidence="4">Expressed in trichomes (PubMed:29258424). Hardly observed in leaves (PubMed:29258424).</text>
</comment>
<comment type="developmental stage">
    <text evidence="4">Highly expressed in the trichomes of emerging leaves (PubMed:29258424). Observed in flower stigma (PubMed:29258424).</text>
</comment>
<comment type="induction">
    <text evidence="4">Repressed by abscisic acid.</text>
</comment>
<comment type="similarity">
    <text evidence="6">Belongs to the ARG7 family.</text>
</comment>
<evidence type="ECO:0000250" key="1">
    <source>
        <dbReference type="UniProtKB" id="O65648"/>
    </source>
</evidence>
<evidence type="ECO:0000250" key="2">
    <source>
        <dbReference type="UniProtKB" id="Q9FJG1"/>
    </source>
</evidence>
<evidence type="ECO:0000250" key="3">
    <source>
        <dbReference type="UniProtKB" id="Q9SI60"/>
    </source>
</evidence>
<evidence type="ECO:0000269" key="4">
    <source>
    </source>
</evidence>
<evidence type="ECO:0000303" key="5">
    <source>
    </source>
</evidence>
<evidence type="ECO:0000305" key="6"/>
<evidence type="ECO:0000312" key="7">
    <source>
        <dbReference type="Araport" id="AT1G19830"/>
    </source>
</evidence>
<evidence type="ECO:0000312" key="8">
    <source>
        <dbReference type="EMBL" id="AAG12564.1"/>
    </source>
</evidence>
<organism>
    <name type="scientific">Arabidopsis thaliana</name>
    <name type="common">Mouse-ear cress</name>
    <dbReference type="NCBI Taxonomy" id="3702"/>
    <lineage>
        <taxon>Eukaryota</taxon>
        <taxon>Viridiplantae</taxon>
        <taxon>Streptophyta</taxon>
        <taxon>Embryophyta</taxon>
        <taxon>Tracheophyta</taxon>
        <taxon>Spermatophyta</taxon>
        <taxon>Magnoliopsida</taxon>
        <taxon>eudicotyledons</taxon>
        <taxon>Gunneridae</taxon>
        <taxon>Pentapetalae</taxon>
        <taxon>rosids</taxon>
        <taxon>malvids</taxon>
        <taxon>Brassicales</taxon>
        <taxon>Brassicaceae</taxon>
        <taxon>Camelineae</taxon>
        <taxon>Arabidopsis</taxon>
    </lineage>
</organism>
<accession>Q9FXI0</accession>
<dbReference type="EMBL" id="AC007797">
    <property type="protein sequence ID" value="AAG12564.1"/>
    <property type="molecule type" value="Genomic_DNA"/>
</dbReference>
<dbReference type="EMBL" id="CP002684">
    <property type="protein sequence ID" value="AEE29902.1"/>
    <property type="molecule type" value="Genomic_DNA"/>
</dbReference>
<dbReference type="EMBL" id="BT004708">
    <property type="protein sequence ID" value="AAO42954.1"/>
    <property type="molecule type" value="mRNA"/>
</dbReference>
<dbReference type="EMBL" id="AK117905">
    <property type="protein sequence ID" value="BAC42543.1"/>
    <property type="molecule type" value="mRNA"/>
</dbReference>
<dbReference type="PIR" id="D86331">
    <property type="entry name" value="D86331"/>
</dbReference>
<dbReference type="RefSeq" id="NP_173411.1">
    <property type="nucleotide sequence ID" value="NM_101837.4"/>
</dbReference>
<dbReference type="FunCoup" id="Q9FXI0">
    <property type="interactions" value="289"/>
</dbReference>
<dbReference type="IntAct" id="Q9FXI0">
    <property type="interactions" value="2"/>
</dbReference>
<dbReference type="STRING" id="3702.Q9FXI0"/>
<dbReference type="PaxDb" id="3702-AT1G19830.1"/>
<dbReference type="EnsemblPlants" id="AT1G19830.1">
    <property type="protein sequence ID" value="AT1G19830.1"/>
    <property type="gene ID" value="AT1G19830"/>
</dbReference>
<dbReference type="GeneID" id="838570"/>
<dbReference type="Gramene" id="AT1G19830.1">
    <property type="protein sequence ID" value="AT1G19830.1"/>
    <property type="gene ID" value="AT1G19830"/>
</dbReference>
<dbReference type="KEGG" id="ath:AT1G19830"/>
<dbReference type="Araport" id="AT1G19830"/>
<dbReference type="TAIR" id="AT1G19830">
    <property type="gene designation" value="SAUR54"/>
</dbReference>
<dbReference type="eggNOG" id="ENOG502RZ3M">
    <property type="taxonomic scope" value="Eukaryota"/>
</dbReference>
<dbReference type="HOGENOM" id="CLU_098106_2_3_1"/>
<dbReference type="InParanoid" id="Q9FXI0"/>
<dbReference type="OMA" id="SEYNDEH"/>
<dbReference type="PhylomeDB" id="Q9FXI0"/>
<dbReference type="PRO" id="PR:Q9FXI0"/>
<dbReference type="Proteomes" id="UP000006548">
    <property type="component" value="Chromosome 1"/>
</dbReference>
<dbReference type="ExpressionAtlas" id="Q9FXI0">
    <property type="expression patterns" value="baseline and differential"/>
</dbReference>
<dbReference type="GO" id="GO:0005886">
    <property type="term" value="C:plasma membrane"/>
    <property type="evidence" value="ECO:0007669"/>
    <property type="project" value="UniProtKB-SubCell"/>
</dbReference>
<dbReference type="GO" id="GO:0009737">
    <property type="term" value="P:response to abscisic acid"/>
    <property type="evidence" value="ECO:0000270"/>
    <property type="project" value="UniProtKB"/>
</dbReference>
<dbReference type="GO" id="GO:0009733">
    <property type="term" value="P:response to auxin"/>
    <property type="evidence" value="ECO:0007669"/>
    <property type="project" value="InterPro"/>
</dbReference>
<dbReference type="InterPro" id="IPR003676">
    <property type="entry name" value="SAUR_fam"/>
</dbReference>
<dbReference type="PANTHER" id="PTHR31929">
    <property type="entry name" value="SAUR-LIKE AUXIN-RESPONSIVE PROTEIN FAMILY-RELATED"/>
    <property type="match status" value="1"/>
</dbReference>
<dbReference type="Pfam" id="PF02519">
    <property type="entry name" value="Auxin_inducible"/>
    <property type="match status" value="1"/>
</dbReference>
<gene>
    <name evidence="5" type="primary">SAUR54</name>
    <name evidence="7" type="ordered locus">At1g19830</name>
    <name evidence="6" type="ORF">F14P1.18</name>
    <name evidence="8" type="ORF">F6F9.13</name>
</gene>
<reference key="1">
    <citation type="journal article" date="2000" name="Nature">
        <title>Sequence and analysis of chromosome 1 of the plant Arabidopsis thaliana.</title>
        <authorList>
            <person name="Theologis A."/>
            <person name="Ecker J.R."/>
            <person name="Palm C.J."/>
            <person name="Federspiel N.A."/>
            <person name="Kaul S."/>
            <person name="White O."/>
            <person name="Alonso J."/>
            <person name="Altafi H."/>
            <person name="Araujo R."/>
            <person name="Bowman C.L."/>
            <person name="Brooks S.Y."/>
            <person name="Buehler E."/>
            <person name="Chan A."/>
            <person name="Chao Q."/>
            <person name="Chen H."/>
            <person name="Cheuk R.F."/>
            <person name="Chin C.W."/>
            <person name="Chung M.K."/>
            <person name="Conn L."/>
            <person name="Conway A.B."/>
            <person name="Conway A.R."/>
            <person name="Creasy T.H."/>
            <person name="Dewar K."/>
            <person name="Dunn P."/>
            <person name="Etgu P."/>
            <person name="Feldblyum T.V."/>
            <person name="Feng J.-D."/>
            <person name="Fong B."/>
            <person name="Fujii C.Y."/>
            <person name="Gill J.E."/>
            <person name="Goldsmith A.D."/>
            <person name="Haas B."/>
            <person name="Hansen N.F."/>
            <person name="Hughes B."/>
            <person name="Huizar L."/>
            <person name="Hunter J.L."/>
            <person name="Jenkins J."/>
            <person name="Johnson-Hopson C."/>
            <person name="Khan S."/>
            <person name="Khaykin E."/>
            <person name="Kim C.J."/>
            <person name="Koo H.L."/>
            <person name="Kremenetskaia I."/>
            <person name="Kurtz D.B."/>
            <person name="Kwan A."/>
            <person name="Lam B."/>
            <person name="Langin-Hooper S."/>
            <person name="Lee A."/>
            <person name="Lee J.M."/>
            <person name="Lenz C.A."/>
            <person name="Li J.H."/>
            <person name="Li Y.-P."/>
            <person name="Lin X."/>
            <person name="Liu S.X."/>
            <person name="Liu Z.A."/>
            <person name="Luros J.S."/>
            <person name="Maiti R."/>
            <person name="Marziali A."/>
            <person name="Militscher J."/>
            <person name="Miranda M."/>
            <person name="Nguyen M."/>
            <person name="Nierman W.C."/>
            <person name="Osborne B.I."/>
            <person name="Pai G."/>
            <person name="Peterson J."/>
            <person name="Pham P.K."/>
            <person name="Rizzo M."/>
            <person name="Rooney T."/>
            <person name="Rowley D."/>
            <person name="Sakano H."/>
            <person name="Salzberg S.L."/>
            <person name="Schwartz J.R."/>
            <person name="Shinn P."/>
            <person name="Southwick A.M."/>
            <person name="Sun H."/>
            <person name="Tallon L.J."/>
            <person name="Tambunga G."/>
            <person name="Toriumi M.J."/>
            <person name="Town C.D."/>
            <person name="Utterback T."/>
            <person name="Van Aken S."/>
            <person name="Vaysberg M."/>
            <person name="Vysotskaia V.S."/>
            <person name="Walker M."/>
            <person name="Wu D."/>
            <person name="Yu G."/>
            <person name="Fraser C.M."/>
            <person name="Venter J.C."/>
            <person name="Davis R.W."/>
        </authorList>
    </citation>
    <scope>NUCLEOTIDE SEQUENCE [LARGE SCALE GENOMIC DNA]</scope>
    <source>
        <strain>cv. Columbia</strain>
    </source>
</reference>
<reference key="2">
    <citation type="journal article" date="2017" name="Plant J.">
        <title>Araport11: a complete reannotation of the Arabidopsis thaliana reference genome.</title>
        <authorList>
            <person name="Cheng C.Y."/>
            <person name="Krishnakumar V."/>
            <person name="Chan A.P."/>
            <person name="Thibaud-Nissen F."/>
            <person name="Schobel S."/>
            <person name="Town C.D."/>
        </authorList>
    </citation>
    <scope>GENOME REANNOTATION</scope>
    <source>
        <strain>cv. Columbia</strain>
    </source>
</reference>
<reference key="3">
    <citation type="journal article" date="2002" name="Science">
        <title>Functional annotation of a full-length Arabidopsis cDNA collection.</title>
        <authorList>
            <person name="Seki M."/>
            <person name="Narusaka M."/>
            <person name="Kamiya A."/>
            <person name="Ishida J."/>
            <person name="Satou M."/>
            <person name="Sakurai T."/>
            <person name="Nakajima M."/>
            <person name="Enju A."/>
            <person name="Akiyama K."/>
            <person name="Oono Y."/>
            <person name="Muramatsu M."/>
            <person name="Hayashizaki Y."/>
            <person name="Kawai J."/>
            <person name="Carninci P."/>
            <person name="Itoh M."/>
            <person name="Ishii Y."/>
            <person name="Arakawa T."/>
            <person name="Shibata K."/>
            <person name="Shinagawa A."/>
            <person name="Shinozaki K."/>
        </authorList>
    </citation>
    <scope>NUCLEOTIDE SEQUENCE [LARGE SCALE MRNA]</scope>
    <source>
        <strain>cv. Columbia</strain>
    </source>
</reference>
<reference key="4">
    <citation type="journal article" date="2003" name="Science">
        <title>Empirical analysis of transcriptional activity in the Arabidopsis genome.</title>
        <authorList>
            <person name="Yamada K."/>
            <person name="Lim J."/>
            <person name="Dale J.M."/>
            <person name="Chen H."/>
            <person name="Shinn P."/>
            <person name="Palm C.J."/>
            <person name="Southwick A.M."/>
            <person name="Wu H.C."/>
            <person name="Kim C.J."/>
            <person name="Nguyen M."/>
            <person name="Pham P.K."/>
            <person name="Cheuk R.F."/>
            <person name="Karlin-Newmann G."/>
            <person name="Liu S.X."/>
            <person name="Lam B."/>
            <person name="Sakano H."/>
            <person name="Wu T."/>
            <person name="Yu G."/>
            <person name="Miranda M."/>
            <person name="Quach H.L."/>
            <person name="Tripp M."/>
            <person name="Chang C.H."/>
            <person name="Lee J.M."/>
            <person name="Toriumi M.J."/>
            <person name="Chan M.M."/>
            <person name="Tang C.C."/>
            <person name="Onodera C.S."/>
            <person name="Deng J.M."/>
            <person name="Akiyama K."/>
            <person name="Ansari Y."/>
            <person name="Arakawa T."/>
            <person name="Banh J."/>
            <person name="Banno F."/>
            <person name="Bowser L."/>
            <person name="Brooks S.Y."/>
            <person name="Carninci P."/>
            <person name="Chao Q."/>
            <person name="Choy N."/>
            <person name="Enju A."/>
            <person name="Goldsmith A.D."/>
            <person name="Gurjal M."/>
            <person name="Hansen N.F."/>
            <person name="Hayashizaki Y."/>
            <person name="Johnson-Hopson C."/>
            <person name="Hsuan V.W."/>
            <person name="Iida K."/>
            <person name="Karnes M."/>
            <person name="Khan S."/>
            <person name="Koesema E."/>
            <person name="Ishida J."/>
            <person name="Jiang P.X."/>
            <person name="Jones T."/>
            <person name="Kawai J."/>
            <person name="Kamiya A."/>
            <person name="Meyers C."/>
            <person name="Nakajima M."/>
            <person name="Narusaka M."/>
            <person name="Seki M."/>
            <person name="Sakurai T."/>
            <person name="Satou M."/>
            <person name="Tamse R."/>
            <person name="Vaysberg M."/>
            <person name="Wallender E.K."/>
            <person name="Wong C."/>
            <person name="Yamamura Y."/>
            <person name="Yuan S."/>
            <person name="Shinozaki K."/>
            <person name="Davis R.W."/>
            <person name="Theologis A."/>
            <person name="Ecker J.R."/>
        </authorList>
    </citation>
    <scope>NUCLEOTIDE SEQUENCE [LARGE SCALE MRNA]</scope>
    <source>
        <strain>cv. Columbia</strain>
    </source>
</reference>
<reference key="5">
    <citation type="journal article" date="2017" name="BMC Plant Biol.">
        <title>Divergent regulation of Arabidopsis SAUR genes: a focus on the SAUR10-clade.</title>
        <authorList>
            <person name="van Mourik H."/>
            <person name="van Dijk A.D.J."/>
            <person name="Stortenbeker N."/>
            <person name="Angenent G.C."/>
            <person name="Bemer M."/>
        </authorList>
    </citation>
    <scope>TISSUE SPECIFICITY</scope>
    <scope>DEVELOPMENTAL STAGE</scope>
    <scope>REPRESSION BY ABSCISIC ACID</scope>
    <scope>GENE FAMILY</scope>
    <source>
        <strain>cv. Columbia</strain>
    </source>
</reference>